<reference key="1">
    <citation type="journal article" date="2011" name="J. Bacteriol.">
        <title>Comparative genomics of 28 Salmonella enterica isolates: evidence for CRISPR-mediated adaptive sublineage evolution.</title>
        <authorList>
            <person name="Fricke W.F."/>
            <person name="Mammel M.K."/>
            <person name="McDermott P.F."/>
            <person name="Tartera C."/>
            <person name="White D.G."/>
            <person name="Leclerc J.E."/>
            <person name="Ravel J."/>
            <person name="Cebula T.A."/>
        </authorList>
    </citation>
    <scope>NUCLEOTIDE SEQUENCE [LARGE SCALE GENOMIC DNA]</scope>
    <source>
        <strain>CT_02021853</strain>
    </source>
</reference>
<comment type="function">
    <text evidence="1">Catalyzes the addition and repair of the essential 3'-terminal CCA sequence in tRNAs without using a nucleic acid template. Adds these three nucleotides in the order of C, C, and A to the tRNA nucleotide-73, using CTP and ATP as substrates and producing inorganic pyrophosphate. tRNA 3'-terminal CCA addition is required both for tRNA processing and repair. Also involved in tRNA surveillance by mediating tandem CCA addition to generate a CCACCA at the 3' terminus of unstable tRNAs. While stable tRNAs receive only 3'-terminal CCA, unstable tRNAs are marked with CCACCA and rapidly degraded.</text>
</comment>
<comment type="catalytic activity">
    <reaction evidence="1">
        <text>a tRNA precursor + 2 CTP + ATP = a tRNA with a 3' CCA end + 3 diphosphate</text>
        <dbReference type="Rhea" id="RHEA:14433"/>
        <dbReference type="Rhea" id="RHEA-COMP:10465"/>
        <dbReference type="Rhea" id="RHEA-COMP:10468"/>
        <dbReference type="ChEBI" id="CHEBI:30616"/>
        <dbReference type="ChEBI" id="CHEBI:33019"/>
        <dbReference type="ChEBI" id="CHEBI:37563"/>
        <dbReference type="ChEBI" id="CHEBI:74896"/>
        <dbReference type="ChEBI" id="CHEBI:83071"/>
        <dbReference type="EC" id="2.7.7.72"/>
    </reaction>
</comment>
<comment type="catalytic activity">
    <reaction evidence="1">
        <text>a tRNA with a 3' CCA end + 2 CTP + ATP = a tRNA with a 3' CCACCA end + 3 diphosphate</text>
        <dbReference type="Rhea" id="RHEA:76235"/>
        <dbReference type="Rhea" id="RHEA-COMP:10468"/>
        <dbReference type="Rhea" id="RHEA-COMP:18655"/>
        <dbReference type="ChEBI" id="CHEBI:30616"/>
        <dbReference type="ChEBI" id="CHEBI:33019"/>
        <dbReference type="ChEBI" id="CHEBI:37563"/>
        <dbReference type="ChEBI" id="CHEBI:83071"/>
        <dbReference type="ChEBI" id="CHEBI:195187"/>
    </reaction>
    <physiologicalReaction direction="left-to-right" evidence="1">
        <dbReference type="Rhea" id="RHEA:76236"/>
    </physiologicalReaction>
</comment>
<comment type="cofactor">
    <cofactor evidence="1">
        <name>Mg(2+)</name>
        <dbReference type="ChEBI" id="CHEBI:18420"/>
    </cofactor>
    <text evidence="1">Magnesium is required for nucleotidyltransferase activity.</text>
</comment>
<comment type="cofactor">
    <cofactor evidence="1">
        <name>Ni(2+)</name>
        <dbReference type="ChEBI" id="CHEBI:49786"/>
    </cofactor>
    <text evidence="1">Nickel for phosphatase activity.</text>
</comment>
<comment type="subunit">
    <text evidence="1">Monomer. Can also form homodimers and oligomers.</text>
</comment>
<comment type="domain">
    <text evidence="1">Comprises two domains: an N-terminal domain containing the nucleotidyltransferase activity and a C-terminal HD domain associated with both phosphodiesterase and phosphatase activities.</text>
</comment>
<comment type="miscellaneous">
    <text evidence="1">A single active site specifically recognizes both ATP and CTP and is responsible for their addition.</text>
</comment>
<comment type="similarity">
    <text evidence="1">Belongs to the tRNA nucleotidyltransferase/poly(A) polymerase family. Bacterial CCA-adding enzyme type 1 subfamily.</text>
</comment>
<organism>
    <name type="scientific">Salmonella dublin (strain CT_02021853)</name>
    <dbReference type="NCBI Taxonomy" id="439851"/>
    <lineage>
        <taxon>Bacteria</taxon>
        <taxon>Pseudomonadati</taxon>
        <taxon>Pseudomonadota</taxon>
        <taxon>Gammaproteobacteria</taxon>
        <taxon>Enterobacterales</taxon>
        <taxon>Enterobacteriaceae</taxon>
        <taxon>Salmonella</taxon>
    </lineage>
</organism>
<evidence type="ECO:0000255" key="1">
    <source>
        <dbReference type="HAMAP-Rule" id="MF_01261"/>
    </source>
</evidence>
<proteinExistence type="inferred from homology"/>
<name>CCA_SALDC</name>
<gene>
    <name evidence="1" type="primary">cca</name>
    <name type="ordered locus">SeD_A3560</name>
</gene>
<protein>
    <recommendedName>
        <fullName evidence="1">Multifunctional CCA protein</fullName>
    </recommendedName>
    <domain>
        <recommendedName>
            <fullName evidence="1">CCA-adding enzyme</fullName>
            <ecNumber evidence="1">2.7.7.72</ecNumber>
        </recommendedName>
        <alternativeName>
            <fullName evidence="1">CCA tRNA nucleotidyltransferase</fullName>
        </alternativeName>
        <alternativeName>
            <fullName evidence="1">tRNA CCA-pyrophosphorylase</fullName>
        </alternativeName>
        <alternativeName>
            <fullName evidence="1">tRNA adenylyl-/cytidylyl-transferase</fullName>
        </alternativeName>
        <alternativeName>
            <fullName evidence="1">tRNA nucleotidyltransferase</fullName>
        </alternativeName>
        <alternativeName>
            <fullName evidence="1">tRNA-NT</fullName>
        </alternativeName>
    </domain>
    <domain>
        <recommendedName>
            <fullName evidence="1">2'-nucleotidase</fullName>
            <ecNumber evidence="1">3.1.3.-</ecNumber>
        </recommendedName>
    </domain>
    <domain>
        <recommendedName>
            <fullName evidence="1">2',3'-cyclic phosphodiesterase</fullName>
            <ecNumber evidence="1">3.1.4.-</ecNumber>
        </recommendedName>
    </domain>
    <domain>
        <recommendedName>
            <fullName evidence="1">Phosphatase</fullName>
            <ecNumber evidence="1">3.1.3.-</ecNumber>
        </recommendedName>
    </domain>
</protein>
<keyword id="KW-0067">ATP-binding</keyword>
<keyword id="KW-0378">Hydrolase</keyword>
<keyword id="KW-0460">Magnesium</keyword>
<keyword id="KW-0479">Metal-binding</keyword>
<keyword id="KW-0511">Multifunctional enzyme</keyword>
<keyword id="KW-0533">Nickel</keyword>
<keyword id="KW-0547">Nucleotide-binding</keyword>
<keyword id="KW-0548">Nucleotidyltransferase</keyword>
<keyword id="KW-0692">RNA repair</keyword>
<keyword id="KW-0694">RNA-binding</keyword>
<keyword id="KW-0808">Transferase</keyword>
<keyword id="KW-0819">tRNA processing</keyword>
<feature type="chain" id="PRO_1000140046" description="Multifunctional CCA protein">
    <location>
        <begin position="1"/>
        <end position="413"/>
    </location>
</feature>
<feature type="domain" description="HD" evidence="1">
    <location>
        <begin position="228"/>
        <end position="329"/>
    </location>
</feature>
<feature type="binding site" evidence="1">
    <location>
        <position position="8"/>
    </location>
    <ligand>
        <name>ATP</name>
        <dbReference type="ChEBI" id="CHEBI:30616"/>
    </ligand>
</feature>
<feature type="binding site" evidence="1">
    <location>
        <position position="8"/>
    </location>
    <ligand>
        <name>CTP</name>
        <dbReference type="ChEBI" id="CHEBI:37563"/>
    </ligand>
</feature>
<feature type="binding site" evidence="1">
    <location>
        <position position="11"/>
    </location>
    <ligand>
        <name>ATP</name>
        <dbReference type="ChEBI" id="CHEBI:30616"/>
    </ligand>
</feature>
<feature type="binding site" evidence="1">
    <location>
        <position position="11"/>
    </location>
    <ligand>
        <name>CTP</name>
        <dbReference type="ChEBI" id="CHEBI:37563"/>
    </ligand>
</feature>
<feature type="binding site" evidence="1">
    <location>
        <position position="21"/>
    </location>
    <ligand>
        <name>Mg(2+)</name>
        <dbReference type="ChEBI" id="CHEBI:18420"/>
    </ligand>
</feature>
<feature type="binding site" evidence="1">
    <location>
        <position position="23"/>
    </location>
    <ligand>
        <name>Mg(2+)</name>
        <dbReference type="ChEBI" id="CHEBI:18420"/>
    </ligand>
</feature>
<feature type="binding site" evidence="1">
    <location>
        <position position="91"/>
    </location>
    <ligand>
        <name>ATP</name>
        <dbReference type="ChEBI" id="CHEBI:30616"/>
    </ligand>
</feature>
<feature type="binding site" evidence="1">
    <location>
        <position position="91"/>
    </location>
    <ligand>
        <name>CTP</name>
        <dbReference type="ChEBI" id="CHEBI:37563"/>
    </ligand>
</feature>
<feature type="binding site" evidence="1">
    <location>
        <position position="137"/>
    </location>
    <ligand>
        <name>ATP</name>
        <dbReference type="ChEBI" id="CHEBI:30616"/>
    </ligand>
</feature>
<feature type="binding site" evidence="1">
    <location>
        <position position="137"/>
    </location>
    <ligand>
        <name>CTP</name>
        <dbReference type="ChEBI" id="CHEBI:37563"/>
    </ligand>
</feature>
<feature type="binding site" evidence="1">
    <location>
        <position position="140"/>
    </location>
    <ligand>
        <name>ATP</name>
        <dbReference type="ChEBI" id="CHEBI:30616"/>
    </ligand>
</feature>
<feature type="binding site" evidence="1">
    <location>
        <position position="140"/>
    </location>
    <ligand>
        <name>CTP</name>
        <dbReference type="ChEBI" id="CHEBI:37563"/>
    </ligand>
</feature>
<sequence>MKIYLVGGAVRDALLGLPVKDKDWVVVGATPQEMLDAGYQQVGRDFPVFLHPQTHEEYALARTERKSGSGYTGFTCYAAPDVTLEADLQRRDLTINALARDDDGQIIDPYHGRRDLEARLLRHVSPAFGEDPLRVLRVARFAARYAHLSFRIADETLALMREMTAAGELEHLTPERVWKETENALTTRNPQVYFQVLRDCGALRVLFPEIDALFGVPAPAKWHPEIDTGVHTLMTLSMAAMLSPQLDVRFATLCHDLGKGLTPKNLWPRHHGHGPAGVKLVEQLCQRLRVPNDLRDLAKLVAEYHDLIHTFPILQPKTIVKLFDAIDAWRKPQRVEQIALTSEADVRGRTGFEASDYPQGRWLREAWQVAQAVPTKEVVEAGFKGIEIREELTKRRIAAVANWKEKRCPNPAS</sequence>
<dbReference type="EC" id="2.7.7.72" evidence="1"/>
<dbReference type="EC" id="3.1.3.-" evidence="1"/>
<dbReference type="EC" id="3.1.4.-" evidence="1"/>
<dbReference type="EMBL" id="CP001144">
    <property type="protein sequence ID" value="ACH73609.1"/>
    <property type="molecule type" value="Genomic_DNA"/>
</dbReference>
<dbReference type="RefSeq" id="WP_000708447.1">
    <property type="nucleotide sequence ID" value="NC_011205.1"/>
</dbReference>
<dbReference type="SMR" id="B5FHT9"/>
<dbReference type="KEGG" id="sed:SeD_A3560"/>
<dbReference type="HOGENOM" id="CLU_015961_1_1_6"/>
<dbReference type="Proteomes" id="UP000008322">
    <property type="component" value="Chromosome"/>
</dbReference>
<dbReference type="GO" id="GO:0005524">
    <property type="term" value="F:ATP binding"/>
    <property type="evidence" value="ECO:0007669"/>
    <property type="project" value="UniProtKB-UniRule"/>
</dbReference>
<dbReference type="GO" id="GO:0004810">
    <property type="term" value="F:CCA tRNA nucleotidyltransferase activity"/>
    <property type="evidence" value="ECO:0007669"/>
    <property type="project" value="UniProtKB-UniRule"/>
</dbReference>
<dbReference type="GO" id="GO:0004112">
    <property type="term" value="F:cyclic-nucleotide phosphodiesterase activity"/>
    <property type="evidence" value="ECO:0007669"/>
    <property type="project" value="UniProtKB-UniRule"/>
</dbReference>
<dbReference type="GO" id="GO:0000287">
    <property type="term" value="F:magnesium ion binding"/>
    <property type="evidence" value="ECO:0007669"/>
    <property type="project" value="UniProtKB-UniRule"/>
</dbReference>
<dbReference type="GO" id="GO:0016791">
    <property type="term" value="F:phosphatase activity"/>
    <property type="evidence" value="ECO:0007669"/>
    <property type="project" value="UniProtKB-UniRule"/>
</dbReference>
<dbReference type="GO" id="GO:0000049">
    <property type="term" value="F:tRNA binding"/>
    <property type="evidence" value="ECO:0007669"/>
    <property type="project" value="UniProtKB-UniRule"/>
</dbReference>
<dbReference type="GO" id="GO:0042245">
    <property type="term" value="P:RNA repair"/>
    <property type="evidence" value="ECO:0007669"/>
    <property type="project" value="UniProtKB-KW"/>
</dbReference>
<dbReference type="GO" id="GO:0001680">
    <property type="term" value="P:tRNA 3'-terminal CCA addition"/>
    <property type="evidence" value="ECO:0007669"/>
    <property type="project" value="UniProtKB-UniRule"/>
</dbReference>
<dbReference type="CDD" id="cd00077">
    <property type="entry name" value="HDc"/>
    <property type="match status" value="1"/>
</dbReference>
<dbReference type="CDD" id="cd05398">
    <property type="entry name" value="NT_ClassII-CCAase"/>
    <property type="match status" value="1"/>
</dbReference>
<dbReference type="FunFam" id="1.10.3090.10:FF:000001">
    <property type="entry name" value="Multifunctional CCA protein"/>
    <property type="match status" value="1"/>
</dbReference>
<dbReference type="FunFam" id="3.30.460.10:FF:000016">
    <property type="entry name" value="Multifunctional CCA protein"/>
    <property type="match status" value="1"/>
</dbReference>
<dbReference type="Gene3D" id="3.30.460.10">
    <property type="entry name" value="Beta Polymerase, domain 2"/>
    <property type="match status" value="1"/>
</dbReference>
<dbReference type="Gene3D" id="1.10.3090.10">
    <property type="entry name" value="cca-adding enzyme, domain 2"/>
    <property type="match status" value="1"/>
</dbReference>
<dbReference type="HAMAP" id="MF_01261">
    <property type="entry name" value="CCA_bact_type1"/>
    <property type="match status" value="1"/>
</dbReference>
<dbReference type="HAMAP" id="MF_01262">
    <property type="entry name" value="CCA_bact_type2"/>
    <property type="match status" value="1"/>
</dbReference>
<dbReference type="InterPro" id="IPR012006">
    <property type="entry name" value="CCA_bact"/>
</dbReference>
<dbReference type="InterPro" id="IPR003607">
    <property type="entry name" value="HD/PDEase_dom"/>
</dbReference>
<dbReference type="InterPro" id="IPR006674">
    <property type="entry name" value="HD_domain"/>
</dbReference>
<dbReference type="InterPro" id="IPR043519">
    <property type="entry name" value="NT_sf"/>
</dbReference>
<dbReference type="InterPro" id="IPR002646">
    <property type="entry name" value="PolA_pol_head_dom"/>
</dbReference>
<dbReference type="InterPro" id="IPR032828">
    <property type="entry name" value="PolyA_RNA-bd"/>
</dbReference>
<dbReference type="InterPro" id="IPR050124">
    <property type="entry name" value="tRNA_CCA-adding_enzyme"/>
</dbReference>
<dbReference type="NCBIfam" id="NF008137">
    <property type="entry name" value="PRK10885.1"/>
    <property type="match status" value="1"/>
</dbReference>
<dbReference type="PANTHER" id="PTHR47545">
    <property type="entry name" value="MULTIFUNCTIONAL CCA PROTEIN"/>
    <property type="match status" value="1"/>
</dbReference>
<dbReference type="PANTHER" id="PTHR47545:SF1">
    <property type="entry name" value="MULTIFUNCTIONAL CCA PROTEIN"/>
    <property type="match status" value="1"/>
</dbReference>
<dbReference type="Pfam" id="PF01966">
    <property type="entry name" value="HD"/>
    <property type="match status" value="1"/>
</dbReference>
<dbReference type="Pfam" id="PF01743">
    <property type="entry name" value="PolyA_pol"/>
    <property type="match status" value="1"/>
</dbReference>
<dbReference type="Pfam" id="PF12627">
    <property type="entry name" value="PolyA_pol_RNAbd"/>
    <property type="match status" value="1"/>
</dbReference>
<dbReference type="PIRSF" id="PIRSF000813">
    <property type="entry name" value="CCA_bact"/>
    <property type="match status" value="1"/>
</dbReference>
<dbReference type="SMART" id="SM00471">
    <property type="entry name" value="HDc"/>
    <property type="match status" value="1"/>
</dbReference>
<dbReference type="SUPFAM" id="SSF81301">
    <property type="entry name" value="Nucleotidyltransferase"/>
    <property type="match status" value="1"/>
</dbReference>
<dbReference type="SUPFAM" id="SSF81891">
    <property type="entry name" value="Poly A polymerase C-terminal region-like"/>
    <property type="match status" value="1"/>
</dbReference>
<dbReference type="PROSITE" id="PS51831">
    <property type="entry name" value="HD"/>
    <property type="match status" value="1"/>
</dbReference>
<accession>B5FHT9</accession>